<name>PI42A_HUMAN</name>
<protein>
    <recommendedName>
        <fullName evidence="17">Phosphatidylinositol 5-phosphate 4-kinase type-2 alpha</fullName>
        <ecNumber evidence="15">2.7.1.149</ecNumber>
    </recommendedName>
    <alternativeName>
        <fullName>1-phosphatidylinositol 5-phosphate 4-kinase 2-alpha</fullName>
    </alternativeName>
    <alternativeName>
        <fullName>Diphosphoinositide kinase 2-alpha</fullName>
    </alternativeName>
    <alternativeName>
        <fullName>PIP5KIII</fullName>
    </alternativeName>
    <alternativeName>
        <fullName>Phosphatidylinositol 5-Phosphate 4-Kinase</fullName>
        <shortName>PI5P4Kalpha</shortName>
    </alternativeName>
    <alternativeName>
        <fullName>Phosphatidylinositol 5-phosphate 4-kinase type II alpha</fullName>
        <shortName>PI(5)P 4-kinase type II alpha</shortName>
        <shortName>PIP4KII-alpha</shortName>
    </alternativeName>
    <alternativeName>
        <fullName>PtdIns(4)P-5-kinase B isoform</fullName>
    </alternativeName>
    <alternativeName>
        <fullName>PtdIns(4)P-5-kinase C isoform</fullName>
    </alternativeName>
    <alternativeName>
        <fullName>PtdIns(5)P-4-kinase isoform 2-alpha</fullName>
    </alternativeName>
</protein>
<keyword id="KW-0002">3D-structure</keyword>
<keyword id="KW-0007">Acetylation</keyword>
<keyword id="KW-0025">Alternative splicing</keyword>
<keyword id="KW-0067">ATP-binding</keyword>
<keyword id="KW-1003">Cell membrane</keyword>
<keyword id="KW-0966">Cell projection</keyword>
<keyword id="KW-0963">Cytoplasm</keyword>
<keyword id="KW-0903">Direct protein sequencing</keyword>
<keyword id="KW-0418">Kinase</keyword>
<keyword id="KW-0443">Lipid metabolism</keyword>
<keyword id="KW-0458">Lysosome</keyword>
<keyword id="KW-0472">Membrane</keyword>
<keyword id="KW-0547">Nucleotide-binding</keyword>
<keyword id="KW-0539">Nucleus</keyword>
<keyword id="KW-0597">Phosphoprotein</keyword>
<keyword id="KW-1267">Proteomics identification</keyword>
<keyword id="KW-1185">Reference proteome</keyword>
<keyword id="KW-0808">Transferase</keyword>
<evidence type="ECO:0000250" key="1">
    <source>
        <dbReference type="UniProtKB" id="O70172"/>
    </source>
</evidence>
<evidence type="ECO:0000250" key="2">
    <source>
        <dbReference type="UniProtKB" id="Q8TBX8"/>
    </source>
</evidence>
<evidence type="ECO:0000250" key="3">
    <source>
        <dbReference type="UniProtKB" id="Q9R0I8"/>
    </source>
</evidence>
<evidence type="ECO:0000255" key="4">
    <source>
        <dbReference type="PROSITE-ProRule" id="PRU00781"/>
    </source>
</evidence>
<evidence type="ECO:0000256" key="5">
    <source>
        <dbReference type="SAM" id="MobiDB-lite"/>
    </source>
</evidence>
<evidence type="ECO:0000269" key="6">
    <source>
    </source>
</evidence>
<evidence type="ECO:0000269" key="7">
    <source>
    </source>
</evidence>
<evidence type="ECO:0000269" key="8">
    <source>
    </source>
</evidence>
<evidence type="ECO:0000269" key="9">
    <source>
    </source>
</evidence>
<evidence type="ECO:0000269" key="10">
    <source>
    </source>
</evidence>
<evidence type="ECO:0000269" key="11">
    <source>
    </source>
</evidence>
<evidence type="ECO:0000269" key="12">
    <source>
    </source>
</evidence>
<evidence type="ECO:0000269" key="13">
    <source>
    </source>
</evidence>
<evidence type="ECO:0000269" key="14">
    <source>
    </source>
</evidence>
<evidence type="ECO:0000269" key="15">
    <source>
    </source>
</evidence>
<evidence type="ECO:0000303" key="16">
    <source>
    </source>
</evidence>
<evidence type="ECO:0000305" key="17"/>
<evidence type="ECO:0000305" key="18">
    <source>
    </source>
</evidence>
<evidence type="ECO:0000305" key="19">
    <source>
    </source>
</evidence>
<evidence type="ECO:0000312" key="20">
    <source>
        <dbReference type="HGNC" id="HGNC:8997"/>
    </source>
</evidence>
<evidence type="ECO:0007744" key="21">
    <source>
        <dbReference type="PDB" id="6OSP"/>
    </source>
</evidence>
<evidence type="ECO:0007744" key="22">
    <source>
    </source>
</evidence>
<evidence type="ECO:0007744" key="23">
    <source>
    </source>
</evidence>
<evidence type="ECO:0007744" key="24">
    <source>
    </source>
</evidence>
<evidence type="ECO:0007744" key="25">
    <source>
    </source>
</evidence>
<evidence type="ECO:0007744" key="26">
    <source>
    </source>
</evidence>
<evidence type="ECO:0007744" key="27">
    <source>
    </source>
</evidence>
<evidence type="ECO:0007744" key="28">
    <source>
    </source>
</evidence>
<evidence type="ECO:0007829" key="29">
    <source>
        <dbReference type="PDB" id="2YBX"/>
    </source>
</evidence>
<evidence type="ECO:0007829" key="30">
    <source>
        <dbReference type="PDB" id="6UX9"/>
    </source>
</evidence>
<evidence type="ECO:0007829" key="31">
    <source>
        <dbReference type="PDB" id="7N6Z"/>
    </source>
</evidence>
<evidence type="ECO:0007829" key="32">
    <source>
        <dbReference type="PDB" id="8C8C"/>
    </source>
</evidence>
<reference key="1">
    <citation type="journal article" date="1995" name="J. Biol. Chem.">
        <title>The sequence of phosphatidylinositol-4-phosphate 5-kinase defines a novel family of lipid kinases.</title>
        <authorList>
            <person name="Boronenkov I.V."/>
            <person name="Anderson R.A."/>
        </authorList>
    </citation>
    <scope>NUCLEOTIDE SEQUENCE [MRNA] (ISOFORM 1)</scope>
    <scope>PROTEIN SEQUENCE OF 30-42; 74-88; 93-112; 141-145; 254-259; 281-297 AND 383-406</scope>
    <scope>TISSUE SPECIFICITY</scope>
    <source>
        <tissue>Placenta</tissue>
    </source>
</reference>
<reference key="2">
    <citation type="submission" date="2000-01" db="EMBL/GenBank/DDBJ databases">
        <authorList>
            <person name="Boronenkov I.V."/>
        </authorList>
    </citation>
    <scope>SEQUENCE REVISION TO 298-310 AND 381-382</scope>
</reference>
<reference key="3">
    <citation type="journal article" date="1995" name="Biochem. J.">
        <title>The cloning and sequence of the C isoform of PtdIns4P 5-kinase.</title>
        <authorList>
            <person name="Divecha N."/>
            <person name="Truong O."/>
            <person name="Hsuan J.J."/>
            <person name="Hinchliffe K.A."/>
            <person name="Irvine R.F."/>
        </authorList>
    </citation>
    <scope>NUCLEOTIDE SEQUENCE [MRNA] (ISOFORM 1)</scope>
    <scope>TISSUE SPECIFICITY</scope>
    <scope>VARIANT SER-251</scope>
    <source>
        <tissue>Leukocyte</tissue>
    </source>
</reference>
<reference key="4">
    <citation type="journal article" date="2004" name="Nat. Genet.">
        <title>Complete sequencing and characterization of 21,243 full-length human cDNAs.</title>
        <authorList>
            <person name="Ota T."/>
            <person name="Suzuki Y."/>
            <person name="Nishikawa T."/>
            <person name="Otsuki T."/>
            <person name="Sugiyama T."/>
            <person name="Irie R."/>
            <person name="Wakamatsu A."/>
            <person name="Hayashi K."/>
            <person name="Sato H."/>
            <person name="Nagai K."/>
            <person name="Kimura K."/>
            <person name="Makita H."/>
            <person name="Sekine M."/>
            <person name="Obayashi M."/>
            <person name="Nishi T."/>
            <person name="Shibahara T."/>
            <person name="Tanaka T."/>
            <person name="Ishii S."/>
            <person name="Yamamoto J."/>
            <person name="Saito K."/>
            <person name="Kawai Y."/>
            <person name="Isono Y."/>
            <person name="Nakamura Y."/>
            <person name="Nagahari K."/>
            <person name="Murakami K."/>
            <person name="Yasuda T."/>
            <person name="Iwayanagi T."/>
            <person name="Wagatsuma M."/>
            <person name="Shiratori A."/>
            <person name="Sudo H."/>
            <person name="Hosoiri T."/>
            <person name="Kaku Y."/>
            <person name="Kodaira H."/>
            <person name="Kondo H."/>
            <person name="Sugawara M."/>
            <person name="Takahashi M."/>
            <person name="Kanda K."/>
            <person name="Yokoi T."/>
            <person name="Furuya T."/>
            <person name="Kikkawa E."/>
            <person name="Omura Y."/>
            <person name="Abe K."/>
            <person name="Kamihara K."/>
            <person name="Katsuta N."/>
            <person name="Sato K."/>
            <person name="Tanikawa M."/>
            <person name="Yamazaki M."/>
            <person name="Ninomiya K."/>
            <person name="Ishibashi T."/>
            <person name="Yamashita H."/>
            <person name="Murakawa K."/>
            <person name="Fujimori K."/>
            <person name="Tanai H."/>
            <person name="Kimata M."/>
            <person name="Watanabe M."/>
            <person name="Hiraoka S."/>
            <person name="Chiba Y."/>
            <person name="Ishida S."/>
            <person name="Ono Y."/>
            <person name="Takiguchi S."/>
            <person name="Watanabe S."/>
            <person name="Yosida M."/>
            <person name="Hotuta T."/>
            <person name="Kusano J."/>
            <person name="Kanehori K."/>
            <person name="Takahashi-Fujii A."/>
            <person name="Hara H."/>
            <person name="Tanase T.-O."/>
            <person name="Nomura Y."/>
            <person name="Togiya S."/>
            <person name="Komai F."/>
            <person name="Hara R."/>
            <person name="Takeuchi K."/>
            <person name="Arita M."/>
            <person name="Imose N."/>
            <person name="Musashino K."/>
            <person name="Yuuki H."/>
            <person name="Oshima A."/>
            <person name="Sasaki N."/>
            <person name="Aotsuka S."/>
            <person name="Yoshikawa Y."/>
            <person name="Matsunawa H."/>
            <person name="Ichihara T."/>
            <person name="Shiohata N."/>
            <person name="Sano S."/>
            <person name="Moriya S."/>
            <person name="Momiyama H."/>
            <person name="Satoh N."/>
            <person name="Takami S."/>
            <person name="Terashima Y."/>
            <person name="Suzuki O."/>
            <person name="Nakagawa S."/>
            <person name="Senoh A."/>
            <person name="Mizoguchi H."/>
            <person name="Goto Y."/>
            <person name="Shimizu F."/>
            <person name="Wakebe H."/>
            <person name="Hishigaki H."/>
            <person name="Watanabe T."/>
            <person name="Sugiyama A."/>
            <person name="Takemoto M."/>
            <person name="Kawakami B."/>
            <person name="Yamazaki M."/>
            <person name="Watanabe K."/>
            <person name="Kumagai A."/>
            <person name="Itakura S."/>
            <person name="Fukuzumi Y."/>
            <person name="Fujimori Y."/>
            <person name="Komiyama M."/>
            <person name="Tashiro H."/>
            <person name="Tanigami A."/>
            <person name="Fujiwara T."/>
            <person name="Ono T."/>
            <person name="Yamada K."/>
            <person name="Fujii Y."/>
            <person name="Ozaki K."/>
            <person name="Hirao M."/>
            <person name="Ohmori Y."/>
            <person name="Kawabata A."/>
            <person name="Hikiji T."/>
            <person name="Kobatake N."/>
            <person name="Inagaki H."/>
            <person name="Ikema Y."/>
            <person name="Okamoto S."/>
            <person name="Okitani R."/>
            <person name="Kawakami T."/>
            <person name="Noguchi S."/>
            <person name="Itoh T."/>
            <person name="Shigeta K."/>
            <person name="Senba T."/>
            <person name="Matsumura K."/>
            <person name="Nakajima Y."/>
            <person name="Mizuno T."/>
            <person name="Morinaga M."/>
            <person name="Sasaki M."/>
            <person name="Togashi T."/>
            <person name="Oyama M."/>
            <person name="Hata H."/>
            <person name="Watanabe M."/>
            <person name="Komatsu T."/>
            <person name="Mizushima-Sugano J."/>
            <person name="Satoh T."/>
            <person name="Shirai Y."/>
            <person name="Takahashi Y."/>
            <person name="Nakagawa K."/>
            <person name="Okumura K."/>
            <person name="Nagase T."/>
            <person name="Nomura N."/>
            <person name="Kikuchi H."/>
            <person name="Masuho Y."/>
            <person name="Yamashita R."/>
            <person name="Nakai K."/>
            <person name="Yada T."/>
            <person name="Nakamura Y."/>
            <person name="Ohara O."/>
            <person name="Isogai T."/>
            <person name="Sugano S."/>
        </authorList>
    </citation>
    <scope>NUCLEOTIDE SEQUENCE [LARGE SCALE MRNA] (ISOFORM 2)</scope>
    <source>
        <tissue>Brain</tissue>
    </source>
</reference>
<reference key="5">
    <citation type="submission" date="2007-02" db="EMBL/GenBank/DDBJ databases">
        <authorList>
            <consortium name="NHLBI resequencing and genotyping service (RS&amp;G)"/>
        </authorList>
    </citation>
    <scope>NUCLEOTIDE SEQUENCE [GENOMIC DNA]</scope>
</reference>
<reference key="6">
    <citation type="journal article" date="2004" name="Nature">
        <title>The DNA sequence and comparative analysis of human chromosome 10.</title>
        <authorList>
            <person name="Deloukas P."/>
            <person name="Earthrowl M.E."/>
            <person name="Grafham D.V."/>
            <person name="Rubenfield M."/>
            <person name="French L."/>
            <person name="Steward C.A."/>
            <person name="Sims S.K."/>
            <person name="Jones M.C."/>
            <person name="Searle S."/>
            <person name="Scott C."/>
            <person name="Howe K."/>
            <person name="Hunt S.E."/>
            <person name="Andrews T.D."/>
            <person name="Gilbert J.G.R."/>
            <person name="Swarbreck D."/>
            <person name="Ashurst J.L."/>
            <person name="Taylor A."/>
            <person name="Battles J."/>
            <person name="Bird C.P."/>
            <person name="Ainscough R."/>
            <person name="Almeida J.P."/>
            <person name="Ashwell R.I.S."/>
            <person name="Ambrose K.D."/>
            <person name="Babbage A.K."/>
            <person name="Bagguley C.L."/>
            <person name="Bailey J."/>
            <person name="Banerjee R."/>
            <person name="Bates K."/>
            <person name="Beasley H."/>
            <person name="Bray-Allen S."/>
            <person name="Brown A.J."/>
            <person name="Brown J.Y."/>
            <person name="Burford D.C."/>
            <person name="Burrill W."/>
            <person name="Burton J."/>
            <person name="Cahill P."/>
            <person name="Camire D."/>
            <person name="Carter N.P."/>
            <person name="Chapman J.C."/>
            <person name="Clark S.Y."/>
            <person name="Clarke G."/>
            <person name="Clee C.M."/>
            <person name="Clegg S."/>
            <person name="Corby N."/>
            <person name="Coulson A."/>
            <person name="Dhami P."/>
            <person name="Dutta I."/>
            <person name="Dunn M."/>
            <person name="Faulkner L."/>
            <person name="Frankish A."/>
            <person name="Frankland J.A."/>
            <person name="Garner P."/>
            <person name="Garnett J."/>
            <person name="Gribble S."/>
            <person name="Griffiths C."/>
            <person name="Grocock R."/>
            <person name="Gustafson E."/>
            <person name="Hammond S."/>
            <person name="Harley J.L."/>
            <person name="Hart E."/>
            <person name="Heath P.D."/>
            <person name="Ho T.P."/>
            <person name="Hopkins B."/>
            <person name="Horne J."/>
            <person name="Howden P.J."/>
            <person name="Huckle E."/>
            <person name="Hynds C."/>
            <person name="Johnson C."/>
            <person name="Johnson D."/>
            <person name="Kana A."/>
            <person name="Kay M."/>
            <person name="Kimberley A.M."/>
            <person name="Kershaw J.K."/>
            <person name="Kokkinaki M."/>
            <person name="Laird G.K."/>
            <person name="Lawlor S."/>
            <person name="Lee H.M."/>
            <person name="Leongamornlert D.A."/>
            <person name="Laird G."/>
            <person name="Lloyd C."/>
            <person name="Lloyd D.M."/>
            <person name="Loveland J."/>
            <person name="Lovell J."/>
            <person name="McLaren S."/>
            <person name="McLay K.E."/>
            <person name="McMurray A."/>
            <person name="Mashreghi-Mohammadi M."/>
            <person name="Matthews L."/>
            <person name="Milne S."/>
            <person name="Nickerson T."/>
            <person name="Nguyen M."/>
            <person name="Overton-Larty E."/>
            <person name="Palmer S.A."/>
            <person name="Pearce A.V."/>
            <person name="Peck A.I."/>
            <person name="Pelan S."/>
            <person name="Phillimore B."/>
            <person name="Porter K."/>
            <person name="Rice C.M."/>
            <person name="Rogosin A."/>
            <person name="Ross M.T."/>
            <person name="Sarafidou T."/>
            <person name="Sehra H.K."/>
            <person name="Shownkeen R."/>
            <person name="Skuce C.D."/>
            <person name="Smith M."/>
            <person name="Standring L."/>
            <person name="Sycamore N."/>
            <person name="Tester J."/>
            <person name="Thorpe A."/>
            <person name="Torcasso W."/>
            <person name="Tracey A."/>
            <person name="Tromans A."/>
            <person name="Tsolas J."/>
            <person name="Wall M."/>
            <person name="Walsh J."/>
            <person name="Wang H."/>
            <person name="Weinstock K."/>
            <person name="West A.P."/>
            <person name="Willey D.L."/>
            <person name="Whitehead S.L."/>
            <person name="Wilming L."/>
            <person name="Wray P.W."/>
            <person name="Young L."/>
            <person name="Chen Y."/>
            <person name="Lovering R.C."/>
            <person name="Moschonas N.K."/>
            <person name="Siebert R."/>
            <person name="Fechtel K."/>
            <person name="Bentley D."/>
            <person name="Durbin R.M."/>
            <person name="Hubbard T."/>
            <person name="Doucette-Stamm L."/>
            <person name="Beck S."/>
            <person name="Smith D.R."/>
            <person name="Rogers J."/>
        </authorList>
    </citation>
    <scope>NUCLEOTIDE SEQUENCE [LARGE SCALE GENOMIC DNA]</scope>
</reference>
<reference key="7">
    <citation type="submission" date="2005-09" db="EMBL/GenBank/DDBJ databases">
        <authorList>
            <person name="Mural R.J."/>
            <person name="Istrail S."/>
            <person name="Sutton G.G."/>
            <person name="Florea L."/>
            <person name="Halpern A.L."/>
            <person name="Mobarry C.M."/>
            <person name="Lippert R."/>
            <person name="Walenz B."/>
            <person name="Shatkay H."/>
            <person name="Dew I."/>
            <person name="Miller J.R."/>
            <person name="Flanigan M.J."/>
            <person name="Edwards N.J."/>
            <person name="Bolanos R."/>
            <person name="Fasulo D."/>
            <person name="Halldorsson B.V."/>
            <person name="Hannenhalli S."/>
            <person name="Turner R."/>
            <person name="Yooseph S."/>
            <person name="Lu F."/>
            <person name="Nusskern D.R."/>
            <person name="Shue B.C."/>
            <person name="Zheng X.H."/>
            <person name="Zhong F."/>
            <person name="Delcher A.L."/>
            <person name="Huson D.H."/>
            <person name="Kravitz S.A."/>
            <person name="Mouchard L."/>
            <person name="Reinert K."/>
            <person name="Remington K.A."/>
            <person name="Clark A.G."/>
            <person name="Waterman M.S."/>
            <person name="Eichler E.E."/>
            <person name="Adams M.D."/>
            <person name="Hunkapiller M.W."/>
            <person name="Myers E.W."/>
            <person name="Venter J.C."/>
        </authorList>
    </citation>
    <scope>NUCLEOTIDE SEQUENCE [LARGE SCALE GENOMIC DNA]</scope>
</reference>
<reference key="8">
    <citation type="journal article" date="2004" name="Genome Res.">
        <title>The status, quality, and expansion of the NIH full-length cDNA project: the Mammalian Gene Collection (MGC).</title>
        <authorList>
            <consortium name="The MGC Project Team"/>
        </authorList>
    </citation>
    <scope>NUCLEOTIDE SEQUENCE [LARGE SCALE MRNA] (ISOFORM 1)</scope>
    <source>
        <tissue>Hippocampus</tissue>
    </source>
</reference>
<reference key="9">
    <citation type="journal article" date="1997" name="Nature">
        <title>A new pathway for synthesis of phosphatidylinositol-4,5-bisphosphate.</title>
        <authorList>
            <person name="Rameh L.E."/>
            <person name="Tolias K.F."/>
            <person name="Duckworth B.C."/>
            <person name="Cantley L.C."/>
        </authorList>
    </citation>
    <scope>CATALYTIC ACTIVITY</scope>
    <scope>FUNCTION</scope>
</reference>
<reference key="10">
    <citation type="journal article" date="2008" name="FEBS Lett.">
        <title>Regulation of extranuclear PtdIns5P production by phosphatidylinositol phosphate 4-kinase 2alpha.</title>
        <authorList>
            <person name="Wilcox A."/>
            <person name="Hinchliffe K.A."/>
        </authorList>
    </citation>
    <scope>FUNCTION</scope>
</reference>
<reference key="11">
    <citation type="journal article" date="2008" name="Mol. Cell">
        <title>Kinase-selective enrichment enables quantitative phosphoproteomics of the kinome across the cell cycle.</title>
        <authorList>
            <person name="Daub H."/>
            <person name="Olsen J.V."/>
            <person name="Bairlein M."/>
            <person name="Gnad F."/>
            <person name="Oppermann F.S."/>
            <person name="Korner R."/>
            <person name="Greff Z."/>
            <person name="Keri G."/>
            <person name="Stemmann O."/>
            <person name="Mann M."/>
        </authorList>
    </citation>
    <scope>PHOSPHORYLATION [LARGE SCALE ANALYSIS] AT SER-14</scope>
    <scope>IDENTIFICATION BY MASS SPECTROMETRY [LARGE SCALE ANALYSIS]</scope>
    <source>
        <tissue>Cervix carcinoma</tissue>
    </source>
</reference>
<reference key="12">
    <citation type="journal article" date="2009" name="Anal. Chem.">
        <title>Lys-N and trypsin cover complementary parts of the phosphoproteome in a refined SCX-based approach.</title>
        <authorList>
            <person name="Gauci S."/>
            <person name="Helbig A.O."/>
            <person name="Slijper M."/>
            <person name="Krijgsveld J."/>
            <person name="Heck A.J."/>
            <person name="Mohammed S."/>
        </authorList>
    </citation>
    <scope>ACETYLATION [LARGE SCALE ANALYSIS] AT ALA-2</scope>
    <scope>CLEAVAGE OF INITIATOR METHIONINE [LARGE SCALE ANALYSIS]</scope>
    <scope>IDENTIFICATION BY MASS SPECTROMETRY [LARGE SCALE ANALYSIS]</scope>
</reference>
<reference key="13">
    <citation type="journal article" date="2009" name="Mol. Cell. Proteomics">
        <title>Large-scale proteomics analysis of the human kinome.</title>
        <authorList>
            <person name="Oppermann F.S."/>
            <person name="Gnad F."/>
            <person name="Olsen J.V."/>
            <person name="Hornberger R."/>
            <person name="Greff Z."/>
            <person name="Keri G."/>
            <person name="Mann M."/>
            <person name="Daub H."/>
        </authorList>
    </citation>
    <scope>ACETYLATION [LARGE SCALE ANALYSIS] AT ALA-2</scope>
    <scope>PHOSPHORYLATION [LARGE SCALE ANALYSIS] AT THR-3 AND SER-14</scope>
    <scope>CLEAVAGE OF INITIATOR METHIONINE [LARGE SCALE ANALYSIS]</scope>
    <scope>IDENTIFICATION BY MASS SPECTROMETRY [LARGE SCALE ANALYSIS]</scope>
</reference>
<reference key="14">
    <citation type="journal article" date="2009" name="Science">
        <title>Lysine acetylation targets protein complexes and co-regulates major cellular functions.</title>
        <authorList>
            <person name="Choudhary C."/>
            <person name="Kumar C."/>
            <person name="Gnad F."/>
            <person name="Nielsen M.L."/>
            <person name="Rehman M."/>
            <person name="Walther T.C."/>
            <person name="Olsen J.V."/>
            <person name="Mann M."/>
        </authorList>
    </citation>
    <scope>ACETYLATION [LARGE SCALE ANALYSIS] AT LYS-89 AND LYS-145</scope>
    <scope>IDENTIFICATION BY MASS SPECTROMETRY [LARGE SCALE ANALYSIS]</scope>
</reference>
<reference key="15">
    <citation type="journal article" date="2010" name="Biochem. J.">
        <title>PIP4Kbeta interacts with and modulates nuclear localization of the high-activity PtdIns5P-4-kinase isoform PIP4Kalpha.</title>
        <authorList>
            <person name="Bultsma Y."/>
            <person name="Keune W.-J."/>
            <person name="Divecha N."/>
        </authorList>
    </citation>
    <scope>BIOPHYSICOCHEMICAL PROPERTIES</scope>
    <scope>INTERACTION WITH PIP4K2B</scope>
    <scope>SUBCELLULAR LOCATION</scope>
    <scope>MUTAGENESIS OF GLY-131 AND TYR-138</scope>
    <scope>IDENTIFICATION BY MASS SPECTROMETRY</scope>
</reference>
<reference key="16">
    <citation type="journal article" date="2010" name="Adv. Enzyme Regul.">
        <title>Localization, regulation and function of type II phosphatidylinositol 5-phosphate 4-kinases.</title>
        <authorList>
            <person name="Clarke J.H."/>
            <person name="Wang M."/>
            <person name="Irvine R.F."/>
        </authorList>
    </citation>
    <scope>REVIEW ON FUNCTION</scope>
</reference>
<reference key="17">
    <citation type="journal article" date="2010" name="Sci. Signal.">
        <title>Quantitative phosphoproteomics reveals widespread full phosphorylation site occupancy during mitosis.</title>
        <authorList>
            <person name="Olsen J.V."/>
            <person name="Vermeulen M."/>
            <person name="Santamaria A."/>
            <person name="Kumar C."/>
            <person name="Miller M.L."/>
            <person name="Jensen L.J."/>
            <person name="Gnad F."/>
            <person name="Cox J."/>
            <person name="Jensen T.S."/>
            <person name="Nigg E.A."/>
            <person name="Brunak S."/>
            <person name="Mann M."/>
        </authorList>
    </citation>
    <scope>ACETYLATION [LARGE SCALE ANALYSIS] AT ALA-2</scope>
    <scope>PHOSPHORYLATION [LARGE SCALE ANALYSIS] AT SER-14</scope>
    <scope>CLEAVAGE OF INITIATOR METHIONINE [LARGE SCALE ANALYSIS]</scope>
    <scope>IDENTIFICATION BY MASS SPECTROMETRY [LARGE SCALE ANALYSIS]</scope>
    <source>
        <tissue>Cervix carcinoma</tissue>
    </source>
</reference>
<reference key="18">
    <citation type="journal article" date="2011" name="BMC Syst. Biol.">
        <title>Initial characterization of the human central proteome.</title>
        <authorList>
            <person name="Burkard T.R."/>
            <person name="Planyavsky M."/>
            <person name="Kaupe I."/>
            <person name="Breitwieser F.P."/>
            <person name="Buerckstuemmer T."/>
            <person name="Bennett K.L."/>
            <person name="Superti-Furga G."/>
            <person name="Colinge J."/>
        </authorList>
    </citation>
    <scope>IDENTIFICATION BY MASS SPECTROMETRY [LARGE SCALE ANALYSIS]</scope>
</reference>
<reference key="19">
    <citation type="journal article" date="2012" name="Mol. Cell. Proteomics">
        <title>Comparative large-scale characterisation of plant vs. mammal proteins reveals similar and idiosyncratic N-alpha acetylation features.</title>
        <authorList>
            <person name="Bienvenut W.V."/>
            <person name="Sumpton D."/>
            <person name="Martinez A."/>
            <person name="Lilla S."/>
            <person name="Espagne C."/>
            <person name="Meinnel T."/>
            <person name="Giglione C."/>
        </authorList>
    </citation>
    <scope>ACETYLATION [LARGE SCALE ANALYSIS] AT ALA-2</scope>
    <scope>CLEAVAGE OF INITIATOR METHIONINE [LARGE SCALE ANALYSIS]</scope>
    <scope>IDENTIFICATION BY MASS SPECTROMETRY [LARGE SCALE ANALYSIS]</scope>
</reference>
<reference key="20">
    <citation type="journal article" date="2013" name="J. Proteome Res.">
        <title>Toward a comprehensive characterization of a human cancer cell phosphoproteome.</title>
        <authorList>
            <person name="Zhou H."/>
            <person name="Di Palma S."/>
            <person name="Preisinger C."/>
            <person name="Peng M."/>
            <person name="Polat A.N."/>
            <person name="Heck A.J."/>
            <person name="Mohammed S."/>
        </authorList>
    </citation>
    <scope>PHOSPHORYLATION [LARGE SCALE ANALYSIS] AT THR-3 AND SER-14</scope>
    <scope>IDENTIFICATION BY MASS SPECTROMETRY [LARGE SCALE ANALYSIS]</scope>
    <source>
        <tissue>Erythroleukemia</tissue>
    </source>
</reference>
<reference key="21">
    <citation type="journal article" date="2013" name="PLoS ONE">
        <title>A homogeneous, high-throughput assay for phosphatidylinositol 5-phosphate 4-kinase with a novel, rapid substrate preparation.</title>
        <authorList>
            <person name="Davis M.I."/>
            <person name="Sasaki A.T."/>
            <person name="Shen M."/>
            <person name="Emerling B.M."/>
            <person name="Thorne N."/>
            <person name="Michael S."/>
            <person name="Pragani R."/>
            <person name="Boxer M."/>
            <person name="Sumita K."/>
            <person name="Takeuchi K."/>
            <person name="Auld D.S."/>
            <person name="Li Z."/>
            <person name="Cantley L.C."/>
            <person name="Simeonov A."/>
        </authorList>
    </citation>
    <scope>FUNCTION</scope>
    <scope>CATALYTIC ACTIVITY</scope>
    <scope>ACTIVITY REGULATION</scope>
</reference>
<reference key="22">
    <citation type="journal article" date="2016" name="Mol. Cell">
        <title>The Lipid Kinase PI5P4Kbeta Is an Intracellular GTP Sensor for Metabolism and Tumorigenesis.</title>
        <authorList>
            <person name="Sumita K."/>
            <person name="Lo Y.H."/>
            <person name="Takeuchi K."/>
            <person name="Senda M."/>
            <person name="Kofuji S."/>
            <person name="Ikeda Y."/>
            <person name="Terakawa J."/>
            <person name="Sasaki M."/>
            <person name="Yoshino H."/>
            <person name="Majd N."/>
            <person name="Zheng Y."/>
            <person name="Kahoud E.R."/>
            <person name="Yokota T."/>
            <person name="Emerling B.M."/>
            <person name="Asara J.M."/>
            <person name="Ishida T."/>
            <person name="Locasale J.W."/>
            <person name="Daikoku T."/>
            <person name="Anastasiou D."/>
            <person name="Senda T."/>
            <person name="Sasaki A.T."/>
        </authorList>
    </citation>
    <scope>FUNCTION</scope>
    <scope>CATALYTIC ACTIVITY</scope>
    <scope>BIOPHYSICOCHEMICAL PROPERTIES</scope>
</reference>
<reference key="23">
    <citation type="journal article" date="2019" name="Cell Rep.">
        <title>PIP4Ks Suppress Insulin Signaling through a Catalytic-Independent Mechanism.</title>
        <authorList>
            <person name="Wang D.G."/>
            <person name="Paddock M.N."/>
            <person name="Lundquist M.R."/>
            <person name="Sun J.Y."/>
            <person name="Mashadova O."/>
            <person name="Amadiume S."/>
            <person name="Bumpus T.W."/>
            <person name="Hodakoski C."/>
            <person name="Hopkins B.D."/>
            <person name="Fine M."/>
            <person name="Hill A."/>
            <person name="Yang T.J."/>
            <person name="Baskin J.M."/>
            <person name="Dow L.E."/>
            <person name="Cantley L.C."/>
        </authorList>
    </citation>
    <scope>FUNCTION</scope>
</reference>
<reference key="24">
    <citation type="journal article" date="2013" name="Psychopharmacology">
        <title>Enzyme activity of the PIP4K2A gene product polymorphism that is implicated in schizophrenia.</title>
        <authorList>
            <person name="Clarke J.H."/>
            <person name="Irvine R.F."/>
        </authorList>
    </citation>
    <scope>CHARACTERIZATION OF VARIANT SER-251</scope>
    <scope>MUTAGENESIS OF ASP-273</scope>
</reference>
<reference key="25">
    <citation type="journal article" date="2018" name="J. Lipid Res.">
        <title>PIP4K2A regulates intracellular cholesterol transport through modulating PI(4,5)P2 homeostasis.</title>
        <authorList>
            <person name="Hu A."/>
            <person name="Zhao X.T."/>
            <person name="Tu H."/>
            <person name="Xiao T."/>
            <person name="Fu T."/>
            <person name="Wang Y."/>
            <person name="Liu Y."/>
            <person name="Shi X.J."/>
            <person name="Luo J."/>
            <person name="Song B.L."/>
        </authorList>
    </citation>
    <scope>FUNCTION</scope>
    <scope>MUTAGENESIS OF ASP-273</scope>
    <scope>CHARACTERIZATION OF VARIANT SER-251</scope>
</reference>
<reference evidence="21" key="26">
    <citation type="journal article" date="2020" name="Cell Chem. Biol.">
        <title>Targeting the PI5P4K Lipid Kinase Family in Cancer Using Covalent Inhibitors.</title>
        <authorList>
            <person name="Sivakumaren S.C."/>
            <person name="Shim H."/>
            <person name="Zhang T."/>
            <person name="Ferguson F.M."/>
            <person name="Lundquist M.R."/>
            <person name="Browne C.M."/>
            <person name="Seo H.S."/>
            <person name="Paddock M.N."/>
            <person name="Manz T.D."/>
            <person name="Jiang B."/>
            <person name="Hao M.F."/>
            <person name="Krishnan P."/>
            <person name="Wang D.G."/>
            <person name="Yang T.J."/>
            <person name="Kwiatkowski N.P."/>
            <person name="Ficarro S.B."/>
            <person name="Cunningham J.M."/>
            <person name="Marto J.A."/>
            <person name="Dhe-Paganon S."/>
            <person name="Cantley L.C."/>
            <person name="Gray N.S."/>
        </authorList>
    </citation>
    <scope>X-RAY CRYSTALLOGRAPHY (2.21 ANGSTROMS) OF 35-405</scope>
    <scope>SUBUNIT</scope>
</reference>
<feature type="initiator methionine" description="Removed" evidence="23 24 26 27">
    <location>
        <position position="1"/>
    </location>
</feature>
<feature type="chain" id="PRO_0000185465" description="Phosphatidylinositol 5-phosphate 4-kinase type-2 alpha">
    <location>
        <begin position="2"/>
        <end position="406"/>
    </location>
</feature>
<feature type="domain" description="PIPK" evidence="4">
    <location>
        <begin position="33"/>
        <end position="405"/>
    </location>
</feature>
<feature type="region of interest" description="Required for interaction with PIP5K1A" evidence="2">
    <location>
        <begin position="59"/>
        <end position="65"/>
    </location>
</feature>
<feature type="region of interest" description="Disordered" evidence="5">
    <location>
        <begin position="288"/>
        <end position="329"/>
    </location>
</feature>
<feature type="compositionally biased region" description="Acidic residues" evidence="5">
    <location>
        <begin position="289"/>
        <end position="304"/>
    </location>
</feature>
<feature type="modified residue" description="N-acetylalanine" evidence="23 24 26 27">
    <location>
        <position position="2"/>
    </location>
</feature>
<feature type="modified residue" description="Phosphothreonine" evidence="23 28">
    <location>
        <position position="3"/>
    </location>
</feature>
<feature type="modified residue" description="Phosphoserine" evidence="22 23 26 28">
    <location>
        <position position="14"/>
    </location>
</feature>
<feature type="modified residue" description="N6-acetyllysine" evidence="25">
    <location>
        <position position="89"/>
    </location>
</feature>
<feature type="modified residue" description="N6-acetyllysine" evidence="25">
    <location>
        <position position="145"/>
    </location>
</feature>
<feature type="splice variant" id="VSP_056458" description="In isoform 2." evidence="16">
    <location>
        <begin position="1"/>
        <end position="59"/>
    </location>
</feature>
<feature type="sequence variant" id="VAR_059764" description="In dbSNP:rs11813789.">
    <original>L</original>
    <variation>I</variation>
    <location>
        <position position="7"/>
    </location>
</feature>
<feature type="sequence variant" id="VAR_024565" description="No effect on kinase activity; increased accumulation of lysosomal cholesterol; dbSNP:rs2230469." evidence="10 13">
    <original>N</original>
    <variation>S</variation>
    <location>
        <position position="251"/>
    </location>
</feature>
<feature type="mutagenesis site" description="Abolishes catalytic activity; when associated with F-138." evidence="7">
    <original>G</original>
    <variation>L</variation>
    <location>
        <position position="131"/>
    </location>
</feature>
<feature type="mutagenesis site" description="Abolishes catalytic activity; when associated with L-131." evidence="7">
    <original>Y</original>
    <variation>F</variation>
    <location>
        <position position="138"/>
    </location>
</feature>
<feature type="mutagenesis site" description="Loss of kinase activity. Increases accumulation of lysosomal cholesterol." evidence="10">
    <original>D</original>
    <variation>K</variation>
    <location>
        <position position="273"/>
    </location>
</feature>
<feature type="sequence conflict" description="In Ref. 3; AAB35041." evidence="17" ref="3">
    <original>LRE</original>
    <variation>CGK</variation>
    <location>
        <begin position="101"/>
        <end position="103"/>
    </location>
</feature>
<feature type="sequence conflict" description="In Ref. 3; AAB35041." evidence="17" ref="3">
    <original>D</original>
    <variation>V</variation>
    <location>
        <position position="109"/>
    </location>
</feature>
<feature type="sequence conflict" description="In Ref. 3; AAB35041." evidence="17" ref="3">
    <original>I</original>
    <variation>M</variation>
    <location>
        <position position="143"/>
    </location>
</feature>
<feature type="sequence conflict" description="In Ref. 3; AAB35041." evidence="17" ref="3">
    <original>QF</original>
    <variation>HL</variation>
    <location>
        <begin position="177"/>
        <end position="178"/>
    </location>
</feature>
<feature type="sequence conflict" description="In Ref. 3; AAB35041." evidence="17" ref="3">
    <original>D</original>
    <variation>E</variation>
    <location>
        <position position="333"/>
    </location>
</feature>
<feature type="helix" evidence="30">
    <location>
        <begin position="36"/>
        <end position="52"/>
    </location>
</feature>
<feature type="helix" evidence="30">
    <location>
        <begin position="63"/>
        <end position="67"/>
    </location>
</feature>
<feature type="strand" evidence="30">
    <location>
        <begin position="69"/>
        <end position="80"/>
    </location>
</feature>
<feature type="turn" evidence="30">
    <location>
        <begin position="81"/>
        <end position="83"/>
    </location>
</feature>
<feature type="strand" evidence="30">
    <location>
        <begin position="86"/>
        <end position="94"/>
    </location>
</feature>
<feature type="helix" evidence="30">
    <location>
        <begin position="95"/>
        <end position="104"/>
    </location>
</feature>
<feature type="helix" evidence="30">
    <location>
        <begin position="109"/>
        <end position="117"/>
    </location>
</feature>
<feature type="strand" evidence="31">
    <location>
        <begin position="122"/>
        <end position="124"/>
    </location>
</feature>
<feature type="strand" evidence="30">
    <location>
        <begin position="134"/>
        <end position="136"/>
    </location>
</feature>
<feature type="strand" evidence="30">
    <location>
        <begin position="140"/>
        <end position="147"/>
    </location>
</feature>
<feature type="helix" evidence="30">
    <location>
        <begin position="149"/>
        <end position="168"/>
    </location>
</feature>
<feature type="turn" evidence="30">
    <location>
        <begin position="169"/>
        <end position="171"/>
    </location>
</feature>
<feature type="strand" evidence="30">
    <location>
        <begin position="178"/>
        <end position="186"/>
    </location>
</feature>
<feature type="strand" evidence="30">
    <location>
        <begin position="189"/>
        <end position="197"/>
    </location>
</feature>
<feature type="strand" evidence="30">
    <location>
        <begin position="202"/>
        <end position="204"/>
    </location>
</feature>
<feature type="strand" evidence="30">
    <location>
        <begin position="207"/>
        <end position="212"/>
    </location>
</feature>
<feature type="strand" evidence="29">
    <location>
        <begin position="215"/>
        <end position="217"/>
    </location>
</feature>
<feature type="helix" evidence="30">
    <location>
        <begin position="223"/>
        <end position="227"/>
    </location>
</feature>
<feature type="strand" evidence="30">
    <location>
        <begin position="228"/>
        <end position="230"/>
    </location>
</feature>
<feature type="strand" evidence="30">
    <location>
        <begin position="232"/>
        <end position="234"/>
    </location>
</feature>
<feature type="helix" evidence="30">
    <location>
        <begin position="235"/>
        <end position="240"/>
    </location>
</feature>
<feature type="helix" evidence="30">
    <location>
        <begin position="249"/>
        <end position="268"/>
    </location>
</feature>
<feature type="strand" evidence="29">
    <location>
        <begin position="271"/>
        <end position="273"/>
    </location>
</feature>
<feature type="strand" evidence="30">
    <location>
        <begin position="275"/>
        <end position="282"/>
    </location>
</feature>
<feature type="helix" evidence="30">
    <location>
        <begin position="283"/>
        <end position="287"/>
    </location>
</feature>
<feature type="turn" evidence="30">
    <location>
        <begin position="334"/>
        <end position="336"/>
    </location>
</feature>
<feature type="strand" evidence="30">
    <location>
        <begin position="340"/>
        <end position="342"/>
    </location>
</feature>
<feature type="strand" evidence="30">
    <location>
        <begin position="351"/>
        <end position="358"/>
    </location>
</feature>
<feature type="helix" evidence="32">
    <location>
        <begin position="364"/>
        <end position="366"/>
    </location>
</feature>
<feature type="helix" evidence="30">
    <location>
        <begin position="390"/>
        <end position="404"/>
    </location>
</feature>
<dbReference type="EC" id="2.7.1.149" evidence="15"/>
<dbReference type="EMBL" id="U14957">
    <property type="protein sequence ID" value="AAA64835.2"/>
    <property type="molecule type" value="mRNA"/>
</dbReference>
<dbReference type="EMBL" id="S78798">
    <property type="protein sequence ID" value="AAB35041.1"/>
    <property type="molecule type" value="mRNA"/>
</dbReference>
<dbReference type="EMBL" id="AL513128">
    <property type="protein sequence ID" value="CAH72211.1"/>
    <property type="molecule type" value="Genomic_DNA"/>
</dbReference>
<dbReference type="EMBL" id="AL157707">
    <property type="protein sequence ID" value="CAH72211.1"/>
    <property type="status" value="JOINED"/>
    <property type="molecule type" value="Genomic_DNA"/>
</dbReference>
<dbReference type="EMBL" id="AL390318">
    <property type="protein sequence ID" value="CAH72211.1"/>
    <property type="status" value="JOINED"/>
    <property type="molecule type" value="Genomic_DNA"/>
</dbReference>
<dbReference type="EMBL" id="AK294817">
    <property type="protein sequence ID" value="BAG57933.1"/>
    <property type="molecule type" value="mRNA"/>
</dbReference>
<dbReference type="EMBL" id="EF445009">
    <property type="protein sequence ID" value="ACA06044.1"/>
    <property type="molecule type" value="Genomic_DNA"/>
</dbReference>
<dbReference type="EMBL" id="EF445009">
    <property type="protein sequence ID" value="ACA06045.1"/>
    <property type="molecule type" value="Genomic_DNA"/>
</dbReference>
<dbReference type="EMBL" id="AL157707">
    <property type="protein sequence ID" value="CAI39585.1"/>
    <property type="molecule type" value="Genomic_DNA"/>
</dbReference>
<dbReference type="EMBL" id="AL390318">
    <property type="protein sequence ID" value="CAI39585.1"/>
    <property type="status" value="JOINED"/>
    <property type="molecule type" value="Genomic_DNA"/>
</dbReference>
<dbReference type="EMBL" id="AL513128">
    <property type="protein sequence ID" value="CAI39585.1"/>
    <property type="status" value="JOINED"/>
    <property type="molecule type" value="Genomic_DNA"/>
</dbReference>
<dbReference type="EMBL" id="AL390318">
    <property type="protein sequence ID" value="CAH70526.1"/>
    <property type="molecule type" value="Genomic_DNA"/>
</dbReference>
<dbReference type="EMBL" id="AL157707">
    <property type="protein sequence ID" value="CAH70526.1"/>
    <property type="status" value="JOINED"/>
    <property type="molecule type" value="Genomic_DNA"/>
</dbReference>
<dbReference type="EMBL" id="AL513128">
    <property type="protein sequence ID" value="CAH70526.1"/>
    <property type="status" value="JOINED"/>
    <property type="molecule type" value="Genomic_DNA"/>
</dbReference>
<dbReference type="EMBL" id="CH471072">
    <property type="protein sequence ID" value="EAW86140.1"/>
    <property type="molecule type" value="Genomic_DNA"/>
</dbReference>
<dbReference type="EMBL" id="CH471072">
    <property type="protein sequence ID" value="EAW86141.1"/>
    <property type="molecule type" value="Genomic_DNA"/>
</dbReference>
<dbReference type="EMBL" id="BC018034">
    <property type="protein sequence ID" value="AAH18034.1"/>
    <property type="molecule type" value="mRNA"/>
</dbReference>
<dbReference type="CCDS" id="CCDS7141.1">
    <molecule id="P48426-1"/>
</dbReference>
<dbReference type="CCDS" id="CCDS81443.1">
    <molecule id="P48426-2"/>
</dbReference>
<dbReference type="PIR" id="A55967">
    <property type="entry name" value="A55967"/>
</dbReference>
<dbReference type="PIR" id="S57217">
    <property type="entry name" value="S57217"/>
</dbReference>
<dbReference type="RefSeq" id="NP_001316991.1">
    <molecule id="P48426-2"/>
    <property type="nucleotide sequence ID" value="NM_001330062.2"/>
</dbReference>
<dbReference type="RefSeq" id="NP_005019.2">
    <molecule id="P48426-1"/>
    <property type="nucleotide sequence ID" value="NM_005028.4"/>
</dbReference>
<dbReference type="RefSeq" id="XP_016871819.1">
    <molecule id="P48426-2"/>
    <property type="nucleotide sequence ID" value="XM_017016330.2"/>
</dbReference>
<dbReference type="RefSeq" id="XP_016871820.1">
    <molecule id="P48426-2"/>
    <property type="nucleotide sequence ID" value="XM_017016331.2"/>
</dbReference>
<dbReference type="RefSeq" id="XP_047281307.1">
    <molecule id="P48426-2"/>
    <property type="nucleotide sequence ID" value="XM_047425351.1"/>
</dbReference>
<dbReference type="PDB" id="2YBX">
    <property type="method" value="X-ray"/>
    <property type="resolution" value="2.56 A"/>
    <property type="chains" value="A/B=35-405"/>
</dbReference>
<dbReference type="PDB" id="6OSP">
    <property type="method" value="X-ray"/>
    <property type="resolution" value="2.21 A"/>
    <property type="chains" value="A/B=35-405"/>
</dbReference>
<dbReference type="PDB" id="6UX9">
    <property type="method" value="X-ray"/>
    <property type="resolution" value="1.71 A"/>
    <property type="chains" value="A/B=35-405"/>
</dbReference>
<dbReference type="PDB" id="6YM3">
    <property type="method" value="X-ray"/>
    <property type="resolution" value="2.05 A"/>
    <property type="chains" value="A/B=35-405"/>
</dbReference>
<dbReference type="PDB" id="6YM4">
    <property type="method" value="X-ray"/>
    <property type="resolution" value="1.95 A"/>
    <property type="chains" value="A/B=35-405"/>
</dbReference>
<dbReference type="PDB" id="6YM5">
    <property type="method" value="X-ray"/>
    <property type="resolution" value="2.50 A"/>
    <property type="chains" value="A/B=35-405"/>
</dbReference>
<dbReference type="PDB" id="7N6Z">
    <property type="method" value="X-ray"/>
    <property type="resolution" value="2.20 A"/>
    <property type="chains" value="A=33-405"/>
</dbReference>
<dbReference type="PDB" id="7N71">
    <property type="method" value="X-ray"/>
    <property type="resolution" value="2.50 A"/>
    <property type="chains" value="A=33-405"/>
</dbReference>
<dbReference type="PDB" id="7N7J">
    <property type="method" value="X-ray"/>
    <property type="resolution" value="2.10 A"/>
    <property type="chains" value="A=33-405"/>
</dbReference>
<dbReference type="PDB" id="7N7K">
    <property type="method" value="X-ray"/>
    <property type="resolution" value="2.00 A"/>
    <property type="chains" value="A=33-405"/>
</dbReference>
<dbReference type="PDB" id="7N7L">
    <property type="method" value="X-ray"/>
    <property type="resolution" value="2.70 A"/>
    <property type="chains" value="A=33-405"/>
</dbReference>
<dbReference type="PDB" id="7N7M">
    <property type="method" value="X-ray"/>
    <property type="resolution" value="2.60 A"/>
    <property type="chains" value="A=33-405"/>
</dbReference>
<dbReference type="PDB" id="7N7N">
    <property type="method" value="X-ray"/>
    <property type="resolution" value="2.30 A"/>
    <property type="chains" value="A=33-405"/>
</dbReference>
<dbReference type="PDB" id="7N7O">
    <property type="method" value="X-ray"/>
    <property type="resolution" value="2.70 A"/>
    <property type="chains" value="A=33-405"/>
</dbReference>
<dbReference type="PDB" id="8C8C">
    <property type="method" value="X-ray"/>
    <property type="resolution" value="2.10 A"/>
    <property type="chains" value="A=33-406"/>
</dbReference>
<dbReference type="PDBsum" id="2YBX"/>
<dbReference type="PDBsum" id="6OSP"/>
<dbReference type="PDBsum" id="6UX9"/>
<dbReference type="PDBsum" id="6YM3"/>
<dbReference type="PDBsum" id="6YM4"/>
<dbReference type="PDBsum" id="6YM5"/>
<dbReference type="PDBsum" id="7N6Z"/>
<dbReference type="PDBsum" id="7N71"/>
<dbReference type="PDBsum" id="7N7J"/>
<dbReference type="PDBsum" id="7N7K"/>
<dbReference type="PDBsum" id="7N7L"/>
<dbReference type="PDBsum" id="7N7M"/>
<dbReference type="PDBsum" id="7N7N"/>
<dbReference type="PDBsum" id="7N7O"/>
<dbReference type="PDBsum" id="8C8C"/>
<dbReference type="SMR" id="P48426"/>
<dbReference type="BioGRID" id="111322">
    <property type="interactions" value="210"/>
</dbReference>
<dbReference type="FunCoup" id="P48426">
    <property type="interactions" value="2787"/>
</dbReference>
<dbReference type="IntAct" id="P48426">
    <property type="interactions" value="134"/>
</dbReference>
<dbReference type="MINT" id="P48426"/>
<dbReference type="STRING" id="9606.ENSP00000365757"/>
<dbReference type="BindingDB" id="P48426"/>
<dbReference type="ChEMBL" id="CHEMBL1795194"/>
<dbReference type="DrugCentral" id="P48426"/>
<dbReference type="GuidetoPHARMACOLOGY" id="2858"/>
<dbReference type="SwissLipids" id="SLP:000000855"/>
<dbReference type="GlyGen" id="P48426">
    <property type="glycosylation" value="2 sites, 1 O-linked glycan (1 site)"/>
</dbReference>
<dbReference type="iPTMnet" id="P48426"/>
<dbReference type="PhosphoSitePlus" id="P48426"/>
<dbReference type="SwissPalm" id="P48426"/>
<dbReference type="BioMuta" id="PIP4K2A"/>
<dbReference type="DMDM" id="18266879"/>
<dbReference type="OGP" id="P48426"/>
<dbReference type="jPOST" id="P48426"/>
<dbReference type="MassIVE" id="P48426"/>
<dbReference type="PaxDb" id="9606-ENSP00000365757"/>
<dbReference type="PeptideAtlas" id="P48426"/>
<dbReference type="ProteomicsDB" id="4169"/>
<dbReference type="ProteomicsDB" id="55887">
    <molecule id="P48426-1"/>
</dbReference>
<dbReference type="Pumba" id="P48426"/>
<dbReference type="Antibodypedia" id="25686">
    <property type="antibodies" value="361 antibodies from 33 providers"/>
</dbReference>
<dbReference type="DNASU" id="5305"/>
<dbReference type="Ensembl" id="ENST00000376573.9">
    <molecule id="P48426-1"/>
    <property type="protein sequence ID" value="ENSP00000365757.4"/>
    <property type="gene ID" value="ENSG00000150867.14"/>
</dbReference>
<dbReference type="Ensembl" id="ENST00000545335.5">
    <molecule id="P48426-2"/>
    <property type="protein sequence ID" value="ENSP00000442098.1"/>
    <property type="gene ID" value="ENSG00000150867.14"/>
</dbReference>
<dbReference type="GeneID" id="5305"/>
<dbReference type="KEGG" id="hsa:5305"/>
<dbReference type="MANE-Select" id="ENST00000376573.9">
    <property type="protein sequence ID" value="ENSP00000365757.4"/>
    <property type="RefSeq nucleotide sequence ID" value="NM_005028.5"/>
    <property type="RefSeq protein sequence ID" value="NP_005019.2"/>
</dbReference>
<dbReference type="UCSC" id="uc001irl.5">
    <molecule id="P48426-1"/>
    <property type="organism name" value="human"/>
</dbReference>
<dbReference type="AGR" id="HGNC:8997"/>
<dbReference type="CTD" id="5305"/>
<dbReference type="DisGeNET" id="5305"/>
<dbReference type="GeneCards" id="PIP4K2A"/>
<dbReference type="HGNC" id="HGNC:8997">
    <property type="gene designation" value="PIP4K2A"/>
</dbReference>
<dbReference type="HPA" id="ENSG00000150867">
    <property type="expression patterns" value="Tissue enhanced (brain)"/>
</dbReference>
<dbReference type="MalaCards" id="PIP4K2A"/>
<dbReference type="MIM" id="603140">
    <property type="type" value="gene"/>
</dbReference>
<dbReference type="neXtProt" id="NX_P48426"/>
<dbReference type="OpenTargets" id="ENSG00000150867"/>
<dbReference type="Orphanet" id="585936">
    <property type="disease" value="B-lymphoblastic leukemia/lymphoma with hyperdiploidy"/>
</dbReference>
<dbReference type="PharmGKB" id="PA162399615"/>
<dbReference type="VEuPathDB" id="HostDB:ENSG00000150867"/>
<dbReference type="eggNOG" id="KOG0229">
    <property type="taxonomic scope" value="Eukaryota"/>
</dbReference>
<dbReference type="GeneTree" id="ENSGT00940000156508"/>
<dbReference type="HOGENOM" id="CLU_004312_7_0_1"/>
<dbReference type="InParanoid" id="P48426"/>
<dbReference type="OMA" id="DYSPMCY"/>
<dbReference type="OrthoDB" id="20783at2759"/>
<dbReference type="PAN-GO" id="P48426">
    <property type="GO annotations" value="3 GO annotations based on evolutionary models"/>
</dbReference>
<dbReference type="PhylomeDB" id="P48426"/>
<dbReference type="TreeFam" id="TF354315"/>
<dbReference type="BioCyc" id="MetaCyc:HS07693-MONOMER"/>
<dbReference type="BRENDA" id="2.7.1.149">
    <property type="organism ID" value="2681"/>
</dbReference>
<dbReference type="PathwayCommons" id="P48426"/>
<dbReference type="Reactome" id="R-HSA-1660499">
    <property type="pathway name" value="Synthesis of PIPs at the plasma membrane"/>
</dbReference>
<dbReference type="Reactome" id="R-HSA-6811555">
    <property type="pathway name" value="PI5P Regulates TP53 Acetylation"/>
</dbReference>
<dbReference type="Reactome" id="R-HSA-6811558">
    <property type="pathway name" value="PI5P, PP2A and IER3 Regulate PI3K/AKT Signaling"/>
</dbReference>
<dbReference type="Reactome" id="R-HSA-8847453">
    <property type="pathway name" value="Synthesis of PIPs in the nucleus"/>
</dbReference>
<dbReference type="SABIO-RK" id="P48426"/>
<dbReference type="SignaLink" id="P48426"/>
<dbReference type="SIGNOR" id="P48426"/>
<dbReference type="BioGRID-ORCS" id="5305">
    <property type="hits" value="19 hits in 1163 CRISPR screens"/>
</dbReference>
<dbReference type="CD-CODE" id="FB4E32DD">
    <property type="entry name" value="Presynaptic clusters and postsynaptic densities"/>
</dbReference>
<dbReference type="ChiTaRS" id="PIP4K2A">
    <property type="organism name" value="human"/>
</dbReference>
<dbReference type="EvolutionaryTrace" id="P48426"/>
<dbReference type="GeneWiki" id="PIP4K2A"/>
<dbReference type="GenomeRNAi" id="5305"/>
<dbReference type="Pharos" id="P48426">
    <property type="development level" value="Tbio"/>
</dbReference>
<dbReference type="PRO" id="PR:P48426"/>
<dbReference type="Proteomes" id="UP000005640">
    <property type="component" value="Chromosome 10"/>
</dbReference>
<dbReference type="RNAct" id="P48426">
    <property type="molecule type" value="protein"/>
</dbReference>
<dbReference type="Bgee" id="ENSG00000150867">
    <property type="expression patterns" value="Expressed in inferior olivary complex and 198 other cell types or tissues"/>
</dbReference>
<dbReference type="ExpressionAtlas" id="P48426">
    <property type="expression patterns" value="baseline and differential"/>
</dbReference>
<dbReference type="GO" id="GO:0005776">
    <property type="term" value="C:autophagosome"/>
    <property type="evidence" value="ECO:0000315"/>
    <property type="project" value="ParkinsonsUK-UCL"/>
</dbReference>
<dbReference type="GO" id="GO:0005829">
    <property type="term" value="C:cytosol"/>
    <property type="evidence" value="ECO:0000314"/>
    <property type="project" value="FlyBase"/>
</dbReference>
<dbReference type="GO" id="GO:0005764">
    <property type="term" value="C:lysosome"/>
    <property type="evidence" value="ECO:0000250"/>
    <property type="project" value="UniProtKB"/>
</dbReference>
<dbReference type="GO" id="GO:0005654">
    <property type="term" value="C:nucleoplasm"/>
    <property type="evidence" value="ECO:0000304"/>
    <property type="project" value="Reactome"/>
</dbReference>
<dbReference type="GO" id="GO:0001917">
    <property type="term" value="C:photoreceptor inner segment"/>
    <property type="evidence" value="ECO:0007669"/>
    <property type="project" value="UniProtKB-SubCell"/>
</dbReference>
<dbReference type="GO" id="GO:0001750">
    <property type="term" value="C:photoreceptor outer segment"/>
    <property type="evidence" value="ECO:0007669"/>
    <property type="project" value="UniProtKB-SubCell"/>
</dbReference>
<dbReference type="GO" id="GO:0005886">
    <property type="term" value="C:plasma membrane"/>
    <property type="evidence" value="ECO:0000314"/>
    <property type="project" value="FlyBase"/>
</dbReference>
<dbReference type="GO" id="GO:0016308">
    <property type="term" value="F:1-phosphatidylinositol-4-phosphate 5-kinase activity"/>
    <property type="evidence" value="ECO:0000314"/>
    <property type="project" value="UniProtKB"/>
</dbReference>
<dbReference type="GO" id="GO:0016309">
    <property type="term" value="F:1-phosphatidylinositol-5-phosphate 4-kinase activity"/>
    <property type="evidence" value="ECO:0000314"/>
    <property type="project" value="FlyBase"/>
</dbReference>
<dbReference type="GO" id="GO:0005524">
    <property type="term" value="F:ATP binding"/>
    <property type="evidence" value="ECO:0007669"/>
    <property type="project" value="UniProtKB-KW"/>
</dbReference>
<dbReference type="GO" id="GO:0042803">
    <property type="term" value="F:protein homodimerization activity"/>
    <property type="evidence" value="ECO:0000314"/>
    <property type="project" value="UniProtKB"/>
</dbReference>
<dbReference type="GO" id="GO:1902635">
    <property type="term" value="P:1-phosphatidyl-1D-myo-inositol 4,5-bisphosphate biosynthetic process"/>
    <property type="evidence" value="ECO:0000314"/>
    <property type="project" value="UniProtKB"/>
</dbReference>
<dbReference type="GO" id="GO:0061909">
    <property type="term" value="P:autophagosome-lysosome fusion"/>
    <property type="evidence" value="ECO:0000250"/>
    <property type="project" value="UniProtKB"/>
</dbReference>
<dbReference type="GO" id="GO:0035855">
    <property type="term" value="P:megakaryocyte development"/>
    <property type="evidence" value="ECO:0007669"/>
    <property type="project" value="Ensembl"/>
</dbReference>
<dbReference type="GO" id="GO:0046627">
    <property type="term" value="P:negative regulation of insulin receptor signaling pathway"/>
    <property type="evidence" value="ECO:0000315"/>
    <property type="project" value="UniProtKB"/>
</dbReference>
<dbReference type="GO" id="GO:0046854">
    <property type="term" value="P:phosphatidylinositol phosphate biosynthetic process"/>
    <property type="evidence" value="ECO:0000318"/>
    <property type="project" value="GO_Central"/>
</dbReference>
<dbReference type="GO" id="GO:2000786">
    <property type="term" value="P:positive regulation of autophagosome assembly"/>
    <property type="evidence" value="ECO:0000315"/>
    <property type="project" value="ParkinsonsUK-UCL"/>
</dbReference>
<dbReference type="GO" id="GO:0010506">
    <property type="term" value="P:regulation of autophagy"/>
    <property type="evidence" value="ECO:0000315"/>
    <property type="project" value="ParkinsonsUK-UCL"/>
</dbReference>
<dbReference type="GO" id="GO:0090119">
    <property type="term" value="P:vesicle-mediated cholesterol transport"/>
    <property type="evidence" value="ECO:0000315"/>
    <property type="project" value="UniProtKB"/>
</dbReference>
<dbReference type="CDD" id="cd17309">
    <property type="entry name" value="PIPKc_PIP5K2A"/>
    <property type="match status" value="1"/>
</dbReference>
<dbReference type="FunFam" id="3.30.800.10:FF:000002">
    <property type="entry name" value="Phosphatidylinositol 5-phosphate 4-kinase type-2 beta"/>
    <property type="match status" value="1"/>
</dbReference>
<dbReference type="FunFam" id="3.30.810.10:FF:000003">
    <property type="entry name" value="Phosphatidylinositol 5-phosphate 4-kinase type-2 beta"/>
    <property type="match status" value="1"/>
</dbReference>
<dbReference type="FunFam" id="3.30.810.10:FF:000004">
    <property type="entry name" value="Phosphatidylinositol 5-phosphate 4-kinase type-2 beta"/>
    <property type="match status" value="1"/>
</dbReference>
<dbReference type="Gene3D" id="3.30.810.10">
    <property type="entry name" value="2-Layer Sandwich"/>
    <property type="match status" value="2"/>
</dbReference>
<dbReference type="Gene3D" id="3.30.800.10">
    <property type="entry name" value="Phosphatidylinositol Phosphate Kinase II Beta"/>
    <property type="match status" value="1"/>
</dbReference>
<dbReference type="InterPro" id="IPR027483">
    <property type="entry name" value="PInositol-4-P-4/5-kinase_C_sf"/>
</dbReference>
<dbReference type="InterPro" id="IPR002498">
    <property type="entry name" value="PInositol-4-P-4/5-kinase_core"/>
</dbReference>
<dbReference type="InterPro" id="IPR027484">
    <property type="entry name" value="PInositol-4-P-5-kinase_N"/>
</dbReference>
<dbReference type="InterPro" id="IPR023610">
    <property type="entry name" value="PInositol-4/5-P-5/4-kinase"/>
</dbReference>
<dbReference type="PANTHER" id="PTHR23086:SF21">
    <property type="entry name" value="PHOSPHATIDYLINOSITOL 5-PHOSPHATE 4-KINASE TYPE-2 ALPHA"/>
    <property type="match status" value="1"/>
</dbReference>
<dbReference type="PANTHER" id="PTHR23086">
    <property type="entry name" value="PHOSPHATIDYLINOSITOL-4-PHOSPHATE 5-KINASE"/>
    <property type="match status" value="1"/>
</dbReference>
<dbReference type="Pfam" id="PF01504">
    <property type="entry name" value="PIP5K"/>
    <property type="match status" value="1"/>
</dbReference>
<dbReference type="SMART" id="SM00330">
    <property type="entry name" value="PIPKc"/>
    <property type="match status" value="1"/>
</dbReference>
<dbReference type="SUPFAM" id="SSF56104">
    <property type="entry name" value="SAICAR synthase-like"/>
    <property type="match status" value="1"/>
</dbReference>
<dbReference type="PROSITE" id="PS51455">
    <property type="entry name" value="PIPK"/>
    <property type="match status" value="1"/>
</dbReference>
<accession>P48426</accession>
<accession>B0YJ66</accession>
<accession>B4DGX2</accession>
<accession>D3DRV1</accession>
<accession>P53807</accession>
<accession>Q5VUX3</accession>
<comment type="function">
    <text evidence="1 3 6 8 9 10 11 15">Catalyzes the phosphorylation of phosphatidylinositol 5-phosphate (PtdIns5P) on the fourth hydroxyl of the myo-inositol ring, to form phosphatidylinositol 4,5-bisphosphate (PtdIns(4,5)P2) (PubMed:23326584, PubMed:9367159). Has both ATP- and GTP-dependent kinase activities (PubMed:26774281). May exert its function by regulating the levels of PtdIns5P, which functions in the cytosol by increasing AKT activity and in the nucleus signals through ING2 (PubMed:18364242). May regulate the pool of cytosolic PtdIns5P in response to the activation of tyrosine phosphorylation (By similarity). Required for lysosome-peroxisome membrane contacts and intracellular cholesterol transport through modulating peroxisomal PtdIns(4,5)P2 level (PubMed:29353240). In collaboration with PIP4K2B, has a role in mediating autophagy in times of nutrient stress (By similarity). Required for autophagosome-lysosome fusion and the regulation of cellular lipid metabolism (PubMed:31091439). May be involved in thrombopoiesis, and the terminal maturation of megakaryocytes and regulation of their size (By similarity). Negatively regulates insulin signaling through a catalytic-independent mechanism (PubMed:31091439). PIP4Ks interact with PIP5Ks and suppress PIP5K-mediated PtdIns(4,5)P2 synthesis and insulin-dependent conversion to PtdIns(3,4,5)P3 (PubMed:31091439).</text>
</comment>
<comment type="catalytic activity">
    <reaction evidence="15">
        <text>a 1,2-diacyl-sn-glycero-3-phospho-(1D-myo-inositol-5-phosphate) + ATP = a 1,2-diacyl-sn-glycero-3-phospho-(1D-myo-inositol-4,5-bisphosphate) + ADP + H(+)</text>
        <dbReference type="Rhea" id="RHEA:12280"/>
        <dbReference type="ChEBI" id="CHEBI:15378"/>
        <dbReference type="ChEBI" id="CHEBI:30616"/>
        <dbReference type="ChEBI" id="CHEBI:57795"/>
        <dbReference type="ChEBI" id="CHEBI:58456"/>
        <dbReference type="ChEBI" id="CHEBI:456216"/>
        <dbReference type="EC" id="2.7.1.149"/>
    </reaction>
    <physiologicalReaction direction="left-to-right" evidence="19">
        <dbReference type="Rhea" id="RHEA:12281"/>
    </physiologicalReaction>
</comment>
<comment type="catalytic activity">
    <reaction evidence="8 9">
        <text>1,2-dihexadecanoyl-sn-glycero-3-phospho-(1D-myo-inositol-5-phosphate) + ATP = 1,2-dihexadecanoyl-sn-glycero-3-phospho-(1D-myo-inositol-4,5-bisphosphate) + ADP + H(+)</text>
        <dbReference type="Rhea" id="RHEA:55992"/>
        <dbReference type="ChEBI" id="CHEBI:15378"/>
        <dbReference type="ChEBI" id="CHEBI:30616"/>
        <dbReference type="ChEBI" id="CHEBI:83423"/>
        <dbReference type="ChEBI" id="CHEBI:84968"/>
        <dbReference type="ChEBI" id="CHEBI:456216"/>
    </reaction>
    <physiologicalReaction direction="left-to-right" evidence="18">
        <dbReference type="Rhea" id="RHEA:55993"/>
    </physiologicalReaction>
</comment>
<comment type="catalytic activity">
    <reaction evidence="9">
        <text>1,2-dihexadecanoyl-sn-glycero-3-phospho-(1D-myo-inositol-5-phosphate) + GTP = 1,2-dihexadecanoyl-sn-glycero-3-phospho-(1D-myo-inositol-4,5-bisphosphate) + GDP + H(+)</text>
        <dbReference type="Rhea" id="RHEA:55964"/>
        <dbReference type="ChEBI" id="CHEBI:15378"/>
        <dbReference type="ChEBI" id="CHEBI:37565"/>
        <dbReference type="ChEBI" id="CHEBI:58189"/>
        <dbReference type="ChEBI" id="CHEBI:83423"/>
        <dbReference type="ChEBI" id="CHEBI:84968"/>
    </reaction>
    <physiologicalReaction direction="left-to-right" evidence="18">
        <dbReference type="Rhea" id="RHEA:55965"/>
    </physiologicalReaction>
</comment>
<comment type="activity regulation">
    <text evidence="3 8">In rod outer segments, activated by light. Inhibited by I-OMe tyrphostin AG-538 (I-OMe-AG-538), acting as an ATP-competitive inhibitor (PubMed:23326584).</text>
</comment>
<comment type="biophysicochemical properties">
    <kinetics>
        <KM evidence="7">50 uM for phosphatidylinositol-5- phosphate</KM>
        <KM evidence="9">5 uM for ATP</KM>
        <KM evidence="9">3 uM for GTP</KM>
        <Vmax evidence="7">466.0 pmol/min/ug enzyme</Vmax>
    </kinetics>
</comment>
<comment type="subunit">
    <text evidence="2 7 12">Homodimer (PubMed:32130941). Interacts with PIP4K2B; the interaction may regulate localization to the nucleus (PubMed:20583997). Probably interacts with PIP5K1A; the interaction inhibits PIP5K1A kinase activity (By similarity).</text>
</comment>
<comment type="interaction">
    <interactant intactId="EBI-3924422">
        <id>P48426</id>
    </interactant>
    <interactant intactId="EBI-18582591">
        <id>Q99687-3</id>
        <label>MEIS3</label>
    </interactant>
    <organismsDiffer>false</organismsDiffer>
    <experiments>3</experiments>
</comment>
<comment type="subcellular location">
    <subcellularLocation>
        <location evidence="1">Cell membrane</location>
    </subcellularLocation>
    <subcellularLocation>
        <location evidence="7">Nucleus</location>
    </subcellularLocation>
    <subcellularLocation>
        <location evidence="1">Lysosome</location>
    </subcellularLocation>
    <subcellularLocation>
        <location evidence="7">Cytoplasm</location>
    </subcellularLocation>
    <subcellularLocation>
        <location evidence="1">Photoreceptor inner segment</location>
    </subcellularLocation>
    <subcellularLocation>
        <location evidence="1">Cell projection</location>
        <location evidence="1">Cilium</location>
        <location evidence="1">Photoreceptor outer segment</location>
    </subcellularLocation>
    <text evidence="1 7">May translocate from the cytosol to the cell membrane upon activation of tyrosine phosphorylation. May translocate from the inner to the outer segments of the rod photoreceptor cells in response to light (By similarity). Localization to the nucleus is modulated by the interaction with PIP4K2B.</text>
</comment>
<comment type="alternative products">
    <event type="alternative splicing"/>
    <isoform>
        <id>P48426-1</id>
        <name>1</name>
        <sequence type="displayed"/>
    </isoform>
    <isoform>
        <id>P48426-2</id>
        <name>2</name>
        <sequence type="described" ref="VSP_056458"/>
    </isoform>
</comment>
<comment type="tissue specificity">
    <text evidence="13 14">Expressed ubiquitously, with high levels in the brain. Present in most tissues, except notably skeletal muscle and small intestine.</text>
</comment>
<comment type="PTM">
    <text evidence="3">Phosphorylated in tyrosines. Phosphorylation is induced by light and increases kinase activity.</text>
</comment>
<comment type="caution">
    <text evidence="17">This protein was previously thought to be a phosphatidylinositol 4-phosphate 5-kinase.</text>
</comment>
<proteinExistence type="evidence at protein level"/>
<organism>
    <name type="scientific">Homo sapiens</name>
    <name type="common">Human</name>
    <dbReference type="NCBI Taxonomy" id="9606"/>
    <lineage>
        <taxon>Eukaryota</taxon>
        <taxon>Metazoa</taxon>
        <taxon>Chordata</taxon>
        <taxon>Craniata</taxon>
        <taxon>Vertebrata</taxon>
        <taxon>Euteleostomi</taxon>
        <taxon>Mammalia</taxon>
        <taxon>Eutheria</taxon>
        <taxon>Euarchontoglires</taxon>
        <taxon>Primates</taxon>
        <taxon>Haplorrhini</taxon>
        <taxon>Catarrhini</taxon>
        <taxon>Hominidae</taxon>
        <taxon>Homo</taxon>
    </lineage>
</organism>
<sequence length="406" mass="46225">MATPGNLGSSVLASKTKTKKKHFVAQKVKLFRASDPLLSVLMWGVNHSINELSHVQIPVMLMPDDFKAYSKIKVDNHLFNKENMPSHFKFKEYCPMVFRNLRERFGIDDQDFQNSLTRSAPLPNDSQARSGARFHTSYDKRYIIKTITSEDVAEMHNILKKYHQYIVECHGITLLPQFLGMYRLNVDGVEIYVIVTRNVFSHRLSVYRKYDLKGSTVAREASDKEKAKELPTLKDNDFINEGQKIYIDDNNKKVFLEKLKKDVEFLAQLKLMDYSLLVGIHDVERAEQEEVECEENDGEEEGESDGTHPVGTPPDSPGNTLNSSPPLAPGEFDPNIDVYGIKCHENSPRKEVYFMAIIDILTHYDAKKKAAHAAKTVKHGAGAEISTVNPEQYSKRFLDFIGHILT</sequence>
<gene>
    <name evidence="20" type="primary">PIP4K2A</name>
    <name type="synonym">PI5P4KA</name>
    <name type="synonym">PIP5K2</name>
    <name type="synonym">PIP5K2A</name>
</gene>